<name>RL14_LISMH</name>
<dbReference type="EMBL" id="CP001175">
    <property type="protein sequence ID" value="ACK41243.1"/>
    <property type="molecule type" value="Genomic_DNA"/>
</dbReference>
<dbReference type="RefSeq" id="WP_003723686.1">
    <property type="nucleotide sequence ID" value="NC_011660.1"/>
</dbReference>
<dbReference type="SMR" id="B8DB18"/>
<dbReference type="GeneID" id="93240503"/>
<dbReference type="KEGG" id="lmh:LMHCC_2912"/>
<dbReference type="HOGENOM" id="CLU_095071_2_1_9"/>
<dbReference type="GO" id="GO:0022625">
    <property type="term" value="C:cytosolic large ribosomal subunit"/>
    <property type="evidence" value="ECO:0007669"/>
    <property type="project" value="TreeGrafter"/>
</dbReference>
<dbReference type="GO" id="GO:0070180">
    <property type="term" value="F:large ribosomal subunit rRNA binding"/>
    <property type="evidence" value="ECO:0007669"/>
    <property type="project" value="TreeGrafter"/>
</dbReference>
<dbReference type="GO" id="GO:0003735">
    <property type="term" value="F:structural constituent of ribosome"/>
    <property type="evidence" value="ECO:0007669"/>
    <property type="project" value="InterPro"/>
</dbReference>
<dbReference type="GO" id="GO:0006412">
    <property type="term" value="P:translation"/>
    <property type="evidence" value="ECO:0007669"/>
    <property type="project" value="UniProtKB-UniRule"/>
</dbReference>
<dbReference type="CDD" id="cd00337">
    <property type="entry name" value="Ribosomal_uL14"/>
    <property type="match status" value="1"/>
</dbReference>
<dbReference type="FunFam" id="2.40.150.20:FF:000001">
    <property type="entry name" value="50S ribosomal protein L14"/>
    <property type="match status" value="1"/>
</dbReference>
<dbReference type="Gene3D" id="2.40.150.20">
    <property type="entry name" value="Ribosomal protein L14"/>
    <property type="match status" value="1"/>
</dbReference>
<dbReference type="HAMAP" id="MF_01367">
    <property type="entry name" value="Ribosomal_uL14"/>
    <property type="match status" value="1"/>
</dbReference>
<dbReference type="InterPro" id="IPR000218">
    <property type="entry name" value="Ribosomal_uL14"/>
</dbReference>
<dbReference type="InterPro" id="IPR005745">
    <property type="entry name" value="Ribosomal_uL14_bac-type"/>
</dbReference>
<dbReference type="InterPro" id="IPR019972">
    <property type="entry name" value="Ribosomal_uL14_CS"/>
</dbReference>
<dbReference type="InterPro" id="IPR036853">
    <property type="entry name" value="Ribosomal_uL14_sf"/>
</dbReference>
<dbReference type="NCBIfam" id="TIGR01067">
    <property type="entry name" value="rplN_bact"/>
    <property type="match status" value="1"/>
</dbReference>
<dbReference type="PANTHER" id="PTHR11761">
    <property type="entry name" value="50S/60S RIBOSOMAL PROTEIN L14/L23"/>
    <property type="match status" value="1"/>
</dbReference>
<dbReference type="PANTHER" id="PTHR11761:SF3">
    <property type="entry name" value="LARGE RIBOSOMAL SUBUNIT PROTEIN UL14M"/>
    <property type="match status" value="1"/>
</dbReference>
<dbReference type="Pfam" id="PF00238">
    <property type="entry name" value="Ribosomal_L14"/>
    <property type="match status" value="1"/>
</dbReference>
<dbReference type="SMART" id="SM01374">
    <property type="entry name" value="Ribosomal_L14"/>
    <property type="match status" value="1"/>
</dbReference>
<dbReference type="SUPFAM" id="SSF50193">
    <property type="entry name" value="Ribosomal protein L14"/>
    <property type="match status" value="1"/>
</dbReference>
<dbReference type="PROSITE" id="PS00049">
    <property type="entry name" value="RIBOSOMAL_L14"/>
    <property type="match status" value="1"/>
</dbReference>
<gene>
    <name evidence="1" type="primary">rplN</name>
    <name type="ordered locus">LMHCC_2912</name>
</gene>
<proteinExistence type="inferred from homology"/>
<feature type="chain" id="PRO_1000166926" description="Large ribosomal subunit protein uL14">
    <location>
        <begin position="1"/>
        <end position="122"/>
    </location>
</feature>
<protein>
    <recommendedName>
        <fullName evidence="1">Large ribosomal subunit protein uL14</fullName>
    </recommendedName>
    <alternativeName>
        <fullName evidence="2">50S ribosomal protein L14</fullName>
    </alternativeName>
</protein>
<comment type="function">
    <text evidence="1">Binds to 23S rRNA. Forms part of two intersubunit bridges in the 70S ribosome.</text>
</comment>
<comment type="subunit">
    <text evidence="1">Part of the 50S ribosomal subunit. Forms a cluster with proteins L3 and L19. In the 70S ribosome, L14 and L19 interact and together make contacts with the 16S rRNA in bridges B5 and B8.</text>
</comment>
<comment type="similarity">
    <text evidence="1">Belongs to the universal ribosomal protein uL14 family.</text>
</comment>
<organism>
    <name type="scientific">Listeria monocytogenes serotype 4a (strain HCC23)</name>
    <dbReference type="NCBI Taxonomy" id="552536"/>
    <lineage>
        <taxon>Bacteria</taxon>
        <taxon>Bacillati</taxon>
        <taxon>Bacillota</taxon>
        <taxon>Bacilli</taxon>
        <taxon>Bacillales</taxon>
        <taxon>Listeriaceae</taxon>
        <taxon>Listeria</taxon>
    </lineage>
</organism>
<reference key="1">
    <citation type="journal article" date="2011" name="J. Bacteriol.">
        <title>Genome sequence of lineage III Listeria monocytogenes strain HCC23.</title>
        <authorList>
            <person name="Steele C.L."/>
            <person name="Donaldson J.R."/>
            <person name="Paul D."/>
            <person name="Banes M.M."/>
            <person name="Arick T."/>
            <person name="Bridges S.M."/>
            <person name="Lawrence M.L."/>
        </authorList>
    </citation>
    <scope>NUCLEOTIDE SEQUENCE [LARGE SCALE GENOMIC DNA]</scope>
    <source>
        <strain>HCC23</strain>
    </source>
</reference>
<accession>B8DB18</accession>
<sequence length="122" mass="13226">MIQQESRMKVADNSGAREVLTIKVLGGSGRKTANIGDVVVCTVKQATPGGVVKKGEVVKAVIVRTKSGARRQDGSYIKFDENACVIIRDDKSPRGTRIFGPVARELRENNFMKIVSLAPEVL</sequence>
<keyword id="KW-0687">Ribonucleoprotein</keyword>
<keyword id="KW-0689">Ribosomal protein</keyword>
<keyword id="KW-0694">RNA-binding</keyword>
<keyword id="KW-0699">rRNA-binding</keyword>
<evidence type="ECO:0000255" key="1">
    <source>
        <dbReference type="HAMAP-Rule" id="MF_01367"/>
    </source>
</evidence>
<evidence type="ECO:0000305" key="2"/>